<organism>
    <name type="scientific">Homo sapiens</name>
    <name type="common">Human</name>
    <dbReference type="NCBI Taxonomy" id="9606"/>
    <lineage>
        <taxon>Eukaryota</taxon>
        <taxon>Metazoa</taxon>
        <taxon>Chordata</taxon>
        <taxon>Craniata</taxon>
        <taxon>Vertebrata</taxon>
        <taxon>Euteleostomi</taxon>
        <taxon>Mammalia</taxon>
        <taxon>Eutheria</taxon>
        <taxon>Euarchontoglires</taxon>
        <taxon>Primates</taxon>
        <taxon>Haplorrhini</taxon>
        <taxon>Catarrhini</taxon>
        <taxon>Hominidae</taxon>
        <taxon>Homo</taxon>
    </lineage>
</organism>
<keyword id="KW-0002">3D-structure</keyword>
<keyword id="KW-0025">Alternative splicing</keyword>
<keyword id="KW-0963">Cytoplasm</keyword>
<keyword id="KW-0539">Nucleus</keyword>
<keyword id="KW-0597">Phosphoprotein</keyword>
<keyword id="KW-1267">Proteomics identification</keyword>
<keyword id="KW-1185">Reference proteome</keyword>
<proteinExistence type="evidence at protein level"/>
<protein>
    <recommendedName>
        <fullName>Testis-expressed protein 10</fullName>
    </recommendedName>
</protein>
<accession>Q9NXF1</accession>
<accession>B4DYV2</accession>
<accession>Q5T722</accession>
<accession>Q5T723</accession>
<accession>Q8NCN8</accession>
<accession>Q8TDY0</accession>
<dbReference type="EMBL" id="AY598337">
    <property type="protein sequence ID" value="AAT06748.1"/>
    <property type="molecule type" value="mRNA"/>
</dbReference>
<dbReference type="EMBL" id="AB060968">
    <property type="protein sequence ID" value="BAB87845.1"/>
    <property type="molecule type" value="mRNA"/>
</dbReference>
<dbReference type="EMBL" id="AK000294">
    <property type="protein sequence ID" value="BAA91062.1"/>
    <property type="molecule type" value="mRNA"/>
</dbReference>
<dbReference type="EMBL" id="AK302619">
    <property type="protein sequence ID" value="BAG63864.1"/>
    <property type="molecule type" value="mRNA"/>
</dbReference>
<dbReference type="EMBL" id="AL353805">
    <property type="status" value="NOT_ANNOTATED_CDS"/>
    <property type="molecule type" value="Genomic_DNA"/>
</dbReference>
<dbReference type="EMBL" id="AL445214">
    <property type="status" value="NOT_ANNOTATED_CDS"/>
    <property type="molecule type" value="Genomic_DNA"/>
</dbReference>
<dbReference type="EMBL" id="BC030652">
    <property type="protein sequence ID" value="AAH30652.1"/>
    <property type="molecule type" value="mRNA"/>
</dbReference>
<dbReference type="CCDS" id="CCDS55330.1">
    <molecule id="Q9NXF1-2"/>
</dbReference>
<dbReference type="CCDS" id="CCDS6748.1">
    <molecule id="Q9NXF1-1"/>
</dbReference>
<dbReference type="RefSeq" id="NP_001155056.1">
    <molecule id="Q9NXF1-2"/>
    <property type="nucleotide sequence ID" value="NM_001161584.2"/>
</dbReference>
<dbReference type="RefSeq" id="NP_060216.2">
    <molecule id="Q9NXF1-1"/>
    <property type="nucleotide sequence ID" value="NM_017746.4"/>
</dbReference>
<dbReference type="PDB" id="8FL2">
    <property type="method" value="EM"/>
    <property type="resolution" value="2.67 A"/>
    <property type="chains" value="NU=1-929"/>
</dbReference>
<dbReference type="PDB" id="8FL3">
    <property type="method" value="EM"/>
    <property type="resolution" value="2.53 A"/>
    <property type="chains" value="NU=1-929"/>
</dbReference>
<dbReference type="PDB" id="8FL4">
    <property type="method" value="EM"/>
    <property type="resolution" value="2.89 A"/>
    <property type="chains" value="NU=1-929"/>
</dbReference>
<dbReference type="PDBsum" id="8FL2"/>
<dbReference type="PDBsum" id="8FL3"/>
<dbReference type="PDBsum" id="8FL4"/>
<dbReference type="EMDB" id="EMD-29265"/>
<dbReference type="EMDB" id="EMD-29266"/>
<dbReference type="EMDB" id="EMD-29267"/>
<dbReference type="SMR" id="Q9NXF1"/>
<dbReference type="BioGRID" id="120229">
    <property type="interactions" value="200"/>
</dbReference>
<dbReference type="ComplexPortal" id="CPX-8081">
    <property type="entry name" value="Rixosome RNA degradation complex"/>
</dbReference>
<dbReference type="CORUM" id="Q9NXF1"/>
<dbReference type="FunCoup" id="Q9NXF1">
    <property type="interactions" value="3892"/>
</dbReference>
<dbReference type="IntAct" id="Q9NXF1">
    <property type="interactions" value="106"/>
</dbReference>
<dbReference type="MINT" id="Q9NXF1"/>
<dbReference type="STRING" id="9606.ENSP00000364037"/>
<dbReference type="GlyCosmos" id="Q9NXF1">
    <property type="glycosylation" value="1 site, 1 glycan"/>
</dbReference>
<dbReference type="GlyGen" id="Q9NXF1">
    <property type="glycosylation" value="1 site, 1 O-linked glycan (1 site)"/>
</dbReference>
<dbReference type="iPTMnet" id="Q9NXF1"/>
<dbReference type="PhosphoSitePlus" id="Q9NXF1"/>
<dbReference type="SwissPalm" id="Q9NXF1"/>
<dbReference type="BioMuta" id="TEX10"/>
<dbReference type="DMDM" id="71153593"/>
<dbReference type="jPOST" id="Q9NXF1"/>
<dbReference type="MassIVE" id="Q9NXF1"/>
<dbReference type="PaxDb" id="9606-ENSP00000364037"/>
<dbReference type="PeptideAtlas" id="Q9NXF1"/>
<dbReference type="ProteomicsDB" id="83086">
    <molecule id="Q9NXF1-1"/>
</dbReference>
<dbReference type="ProteomicsDB" id="83087">
    <molecule id="Q9NXF1-2"/>
</dbReference>
<dbReference type="Pumba" id="Q9NXF1"/>
<dbReference type="Antibodypedia" id="43979">
    <property type="antibodies" value="32 antibodies from 13 providers"/>
</dbReference>
<dbReference type="DNASU" id="54881"/>
<dbReference type="Ensembl" id="ENST00000374902.9">
    <molecule id="Q9NXF1-1"/>
    <property type="protein sequence ID" value="ENSP00000364037.4"/>
    <property type="gene ID" value="ENSG00000136891.14"/>
</dbReference>
<dbReference type="Ensembl" id="ENST00000535814.5">
    <molecule id="Q9NXF1-2"/>
    <property type="protein sequence ID" value="ENSP00000444555.1"/>
    <property type="gene ID" value="ENSG00000136891.14"/>
</dbReference>
<dbReference type="GeneID" id="54881"/>
<dbReference type="KEGG" id="hsa:54881"/>
<dbReference type="MANE-Select" id="ENST00000374902.9">
    <property type="protein sequence ID" value="ENSP00000364037.4"/>
    <property type="RefSeq nucleotide sequence ID" value="NM_017746.4"/>
    <property type="RefSeq protein sequence ID" value="NP_060216.2"/>
</dbReference>
<dbReference type="UCSC" id="uc004bas.4">
    <molecule id="Q9NXF1-1"/>
    <property type="organism name" value="human"/>
</dbReference>
<dbReference type="AGR" id="HGNC:25988"/>
<dbReference type="CTD" id="54881"/>
<dbReference type="DisGeNET" id="54881"/>
<dbReference type="GeneCards" id="TEX10"/>
<dbReference type="HGNC" id="HGNC:25988">
    <property type="gene designation" value="TEX10"/>
</dbReference>
<dbReference type="HPA" id="ENSG00000136891">
    <property type="expression patterns" value="Low tissue specificity"/>
</dbReference>
<dbReference type="neXtProt" id="NX_Q9NXF1"/>
<dbReference type="OpenTargets" id="ENSG00000136891"/>
<dbReference type="PharmGKB" id="PA134991964"/>
<dbReference type="VEuPathDB" id="HostDB:ENSG00000136891"/>
<dbReference type="eggNOG" id="KOG2149">
    <property type="taxonomic scope" value="Eukaryota"/>
</dbReference>
<dbReference type="GeneTree" id="ENSGT00950000182992"/>
<dbReference type="HOGENOM" id="CLU_014208_0_0_1"/>
<dbReference type="InParanoid" id="Q9NXF1"/>
<dbReference type="OMA" id="WKLHANN"/>
<dbReference type="OrthoDB" id="361362at2759"/>
<dbReference type="PAN-GO" id="Q9NXF1">
    <property type="GO annotations" value="2 GO annotations based on evolutionary models"/>
</dbReference>
<dbReference type="PhylomeDB" id="Q9NXF1"/>
<dbReference type="TreeFam" id="TF318197"/>
<dbReference type="PathwayCommons" id="Q9NXF1"/>
<dbReference type="Reactome" id="R-HSA-6791226">
    <property type="pathway name" value="Major pathway of rRNA processing in the nucleolus and cytosol"/>
</dbReference>
<dbReference type="SignaLink" id="Q9NXF1"/>
<dbReference type="SIGNOR" id="Q9NXF1"/>
<dbReference type="BioGRID-ORCS" id="54881">
    <property type="hits" value="635 hits in 1172 CRISPR screens"/>
</dbReference>
<dbReference type="CD-CODE" id="91857CE7">
    <property type="entry name" value="Nucleolus"/>
</dbReference>
<dbReference type="ChiTaRS" id="TEX10">
    <property type="organism name" value="human"/>
</dbReference>
<dbReference type="GeneWiki" id="TEX10"/>
<dbReference type="GenomeRNAi" id="54881"/>
<dbReference type="Pharos" id="Q9NXF1">
    <property type="development level" value="Tdark"/>
</dbReference>
<dbReference type="PRO" id="PR:Q9NXF1"/>
<dbReference type="Proteomes" id="UP000005640">
    <property type="component" value="Chromosome 9"/>
</dbReference>
<dbReference type="RNAct" id="Q9NXF1">
    <property type="molecule type" value="protein"/>
</dbReference>
<dbReference type="Bgee" id="ENSG00000136891">
    <property type="expression patterns" value="Expressed in ventricular zone and 173 other cell types or tissues"/>
</dbReference>
<dbReference type="ExpressionAtlas" id="Q9NXF1">
    <property type="expression patterns" value="baseline and differential"/>
</dbReference>
<dbReference type="GO" id="GO:0005739">
    <property type="term" value="C:mitochondrion"/>
    <property type="evidence" value="ECO:0000314"/>
    <property type="project" value="HPA"/>
</dbReference>
<dbReference type="GO" id="GO:0071339">
    <property type="term" value="C:MLL1 complex"/>
    <property type="evidence" value="ECO:0000314"/>
    <property type="project" value="UniProtKB"/>
</dbReference>
<dbReference type="GO" id="GO:0005730">
    <property type="term" value="C:nucleolus"/>
    <property type="evidence" value="ECO:0007669"/>
    <property type="project" value="UniProtKB-SubCell"/>
</dbReference>
<dbReference type="GO" id="GO:0005654">
    <property type="term" value="C:nucleoplasm"/>
    <property type="evidence" value="ECO:0000314"/>
    <property type="project" value="HPA"/>
</dbReference>
<dbReference type="GO" id="GO:0005634">
    <property type="term" value="C:nucleus"/>
    <property type="evidence" value="ECO:0000318"/>
    <property type="project" value="GO_Central"/>
</dbReference>
<dbReference type="FunFam" id="1.25.10.10:FF:000498">
    <property type="entry name" value="testis-expressed sequence 10 protein"/>
    <property type="match status" value="1"/>
</dbReference>
<dbReference type="Gene3D" id="1.25.10.10">
    <property type="entry name" value="Leucine-rich Repeat Variant"/>
    <property type="match status" value="1"/>
</dbReference>
<dbReference type="InterPro" id="IPR011989">
    <property type="entry name" value="ARM-like"/>
</dbReference>
<dbReference type="InterPro" id="IPR016024">
    <property type="entry name" value="ARM-type_fold"/>
</dbReference>
<dbReference type="InterPro" id="IPR021133">
    <property type="entry name" value="HEAT_type_2"/>
</dbReference>
<dbReference type="InterPro" id="IPR024679">
    <property type="entry name" value="Ipi1_N"/>
</dbReference>
<dbReference type="PANTHER" id="PTHR16056">
    <property type="entry name" value="REGULATOR OF MICROTUBULE DYNAMICS PROTEIN"/>
    <property type="match status" value="1"/>
</dbReference>
<dbReference type="PANTHER" id="PTHR16056:SF2">
    <property type="entry name" value="TESTIS-EXPRESSED PROTEIN 10"/>
    <property type="match status" value="1"/>
</dbReference>
<dbReference type="Pfam" id="PF12333">
    <property type="entry name" value="Ipi1_N"/>
    <property type="match status" value="1"/>
</dbReference>
<dbReference type="SUPFAM" id="SSF48371">
    <property type="entry name" value="ARM repeat"/>
    <property type="match status" value="1"/>
</dbReference>
<dbReference type="PROSITE" id="PS50077">
    <property type="entry name" value="HEAT_REPEAT"/>
    <property type="match status" value="1"/>
</dbReference>
<gene>
    <name type="primary">TEX10</name>
    <name type="ORF">L18</name>
    <name type="ORF">Nbla10363</name>
</gene>
<evidence type="ECO:0000250" key="1">
    <source>
        <dbReference type="UniProtKB" id="Q3URQ0"/>
    </source>
</evidence>
<evidence type="ECO:0000269" key="2">
    <source>
    </source>
</evidence>
<evidence type="ECO:0000269" key="3">
    <source>
    </source>
</evidence>
<evidence type="ECO:0000269" key="4">
    <source>
    </source>
</evidence>
<evidence type="ECO:0000269" key="5">
    <source>
    </source>
</evidence>
<evidence type="ECO:0000303" key="6">
    <source>
    </source>
</evidence>
<evidence type="ECO:0000305" key="7"/>
<evidence type="ECO:0007744" key="8">
    <source>
    </source>
</evidence>
<evidence type="ECO:0007744" key="9">
    <source>
    </source>
</evidence>
<feature type="chain" id="PRO_0000072491" description="Testis-expressed protein 10">
    <location>
        <begin position="1"/>
        <end position="929"/>
    </location>
</feature>
<feature type="repeat" description="HEAT">
    <location>
        <begin position="99"/>
        <end position="137"/>
    </location>
</feature>
<feature type="modified residue" description="Phosphothreonine" evidence="8 9">
    <location>
        <position position="29"/>
    </location>
</feature>
<feature type="splice variant" id="VSP_043704" description="In isoform 2." evidence="6">
    <original>M</original>
    <variation>MSRM</variation>
    <location>
        <position position="1"/>
    </location>
</feature>
<feature type="splice variant" id="VSP_043705" description="In isoform 2." evidence="6">
    <location>
        <begin position="822"/>
        <end position="840"/>
    </location>
</feature>
<feature type="sequence conflict" description="In Ref. 5; AAH30652." evidence="7" ref="5">
    <original>R</original>
    <variation>G</variation>
    <location>
        <position position="411"/>
    </location>
</feature>
<feature type="sequence conflict" description="In Ref. 1; AAT06748 and 3; BAA91062." evidence="7" ref="1 3">
    <original>H</original>
    <variation>R</variation>
    <location>
        <position position="430"/>
    </location>
</feature>
<feature type="sequence conflict" description="In Ref. 5; AAH30652." evidence="7" ref="5">
    <original>F</original>
    <variation>L</variation>
    <location>
        <position position="526"/>
    </location>
</feature>
<feature type="sequence conflict" description="In Ref. 2; BAB87845." evidence="7" ref="2">
    <original>D</original>
    <variation>E</variation>
    <location>
        <position position="731"/>
    </location>
</feature>
<sequence>MTKKRKRQHDFQKVKLKVGKKKPKLQNATPTNFKTKTIHLPEQLKEDGTLPTNNRKLNIKDLLSQMHHYNAGVKQSALLGLKDLLSQYPFIIDAHLSNILSEVTAVFTDKDANVRLAAVQLLQFLAPKIRAEQISPFFPLVSAHLSSAMTHITEGIQEDSLKVLDILLEQYPALITGRSSILLKNFVELISHQQLSKGLINRDRSQSWILSVNPNRRLTSQQWRLKVLVRLSKFLQALADGSSRLRESEGLQEQKENPHATSNSIFINWKEHANDQQHIQVYENGGSQPNVSSQFRLRYLVGGLSGVDEGLSSTENLKGFIEIIIPLLIECWVEAVPPQLATPVGNGIEREPLQVMQQVLNIISLLWKLSKQQDETHKLESWLRKNYLIDFKHHFMSRFPYVLKEITKHKRKEPNKSIKHCTVLSNNIDHLLLNLTLSDIMVSLANASTLQKDCSWIEMIRKFVTETLEDGSRLNSKQLNRLLGVSWRLMQIQPNREDTETLIKAVYTLYQQRGLILPVRTLLLKFFSKIYQTEELRSCRFRYRSKVLSRWLAGLPLQLAHLGSRNPELSTQLIDIIHTAAARANKELLKSLQATALRIYDPQEGAVVVLPADSQQRLVQLVYFLPSLPADLLSRLSRCCIMGRLSSSLAAMLIGILHMRSSFSGWKYSAKDWLMSDVDYFSFLFSTLTGFSKEELTWLQSLRGVPHVIQTQLSPVLLYLTDLDQFLHHWDVTEAVFHSLLVIPARSQNFDILQSAISKHLVGLTVIPDSTAGCVFGVICKLLDHTCVVSETLLPFLASCCYSLLYFLLTIEKGEAEHLRKRDKLWGVCVSILALLPRVLRLMLQSLRVNRVGPEELPVVGQLLRLLLQHAPLRTHMLTNAILVQQIIKNITTLKSGSVQEQWLTDLHYCFNVYITGHPQGPSALATVY</sequence>
<comment type="function">
    <text evidence="4 5">Functions as a component of the Five Friends of Methylated CHTOP (5FMC) complex; the 5FMC complex is recruited to ZNF148 by methylated CHTOP, leading to desumoylation of ZNF148 and subsequent transactivation of ZNF148 target genes (PubMed:22872859). Component of the PELP1 complex involved in the nucleolar steps of 28S rRNA maturation and the subsequent nucleoplasmic transit of the pre-60S ribosomal subunit (PubMed:21326211).</text>
</comment>
<comment type="subunit">
    <text evidence="3 4 5">Component of some MLL1/MLL complex, at least composed of the core components KMT2A/MLL1, ASH2L, HCFC1/HCF1, WDR5 and RBBP5, as well as the facultative components BACC1, CHD8, E2F6, HSP70, INO80C, KANSL1, LAS1L, MAX, MCRS1, MGA, KAT8/MOF, PELP1, PHF20, PRP31, RING2, RUVB1/TIP49A, RUVB2/TIP49B, SENP3, TAF1, TAF4, TAF6, TAF7, TAF9 and TEX10. Component of the 5FMC complex, at least composed of PELP1, LAS1L, TEX10, WDR18 and SENP3; the complex interacts with methylated CHTOP and ZNF148. Component of the PELP1 complex, composed of at least PELP1, TEX10 and WDR18. The complex interacts with pre-60S ribosome particles (PubMed:21326211).</text>
</comment>
<comment type="interaction">
    <interactant intactId="EBI-2371062">
        <id>Q9NXF1</id>
    </interactant>
    <interactant intactId="EBI-716449">
        <id>Q8IZL8</id>
        <label>PELP1</label>
    </interactant>
    <organismsDiffer>false</organismsDiffer>
    <experiments>6</experiments>
</comment>
<comment type="interaction">
    <interactant intactId="EBI-2371062">
        <id>Q9NXF1</id>
    </interactant>
    <interactant intactId="EBI-2880236">
        <id>Q9H4L4</id>
        <label>SENP3</label>
    </interactant>
    <organismsDiffer>false</organismsDiffer>
    <experiments>4</experiments>
</comment>
<comment type="interaction">
    <interactant intactId="EBI-2371062">
        <id>Q9NXF1</id>
    </interactant>
    <interactant intactId="EBI-727429">
        <id>Q9BV38</id>
        <label>WDR18</label>
    </interactant>
    <organismsDiffer>false</organismsDiffer>
    <experiments>4</experiments>
</comment>
<comment type="subcellular location">
    <subcellularLocation>
        <location evidence="1">Nucleus</location>
        <location evidence="1">Nucleoplasm</location>
    </subcellularLocation>
    <subcellularLocation>
        <location evidence="1">Cytoplasm</location>
    </subcellularLocation>
    <subcellularLocation>
        <location evidence="2 4">Nucleus</location>
        <location evidence="2 4">Nucleolus</location>
    </subcellularLocation>
    <text evidence="1">Mainly found in the nucleoplasm, with low levels detected in the cytoplasmic and chromatin fractions.</text>
</comment>
<comment type="alternative products">
    <event type="alternative splicing"/>
    <isoform>
        <id>Q9NXF1-1</id>
        <name>1</name>
        <sequence type="displayed"/>
    </isoform>
    <isoform>
        <id>Q9NXF1-2</id>
        <name>2</name>
        <sequence type="described" ref="VSP_043704 VSP_043705"/>
    </isoform>
</comment>
<comment type="similarity">
    <text evidence="7">Belongs to the IPI1/TEX10 family.</text>
</comment>
<name>TEX10_HUMAN</name>
<reference key="1">
    <citation type="journal article" date="2004" name="Oncogene">
        <title>Suppression subtractive hybridization and expression profiling identifies a unique set of genes overexpressed in non-small-cell lung cancer.</title>
        <authorList>
            <person name="Petroziello J."/>
            <person name="Yamane A."/>
            <person name="Westendorf L."/>
            <person name="Thompson M."/>
            <person name="McDonagh C."/>
            <person name="Cerveny C."/>
            <person name="Law C.-L."/>
            <person name="Wahl A."/>
            <person name="Carter P."/>
        </authorList>
    </citation>
    <scope>NUCLEOTIDE SEQUENCE [MRNA] (ISOFORM 1)</scope>
</reference>
<reference key="2">
    <citation type="journal article" date="2003" name="Cancer Lett.">
        <title>Neuroblastoma oligo-capping cDNA project: toward the understanding of the genesis and biology of neuroblastoma.</title>
        <authorList>
            <person name="Ohira M."/>
            <person name="Morohashi A."/>
            <person name="Nakamura Y."/>
            <person name="Isogai E."/>
            <person name="Furuya K."/>
            <person name="Hamano S."/>
            <person name="Machida T."/>
            <person name="Aoyama M."/>
            <person name="Fukumura M."/>
            <person name="Miyazaki K."/>
            <person name="Suzuki Y."/>
            <person name="Sugano S."/>
            <person name="Hirato J."/>
            <person name="Nakagawara A."/>
        </authorList>
    </citation>
    <scope>NUCLEOTIDE SEQUENCE [LARGE SCALE MRNA] (ISOFORM 1)</scope>
    <source>
        <tissue>Neuroblastoma</tissue>
    </source>
</reference>
<reference key="3">
    <citation type="journal article" date="2004" name="Nat. Genet.">
        <title>Complete sequencing and characterization of 21,243 full-length human cDNAs.</title>
        <authorList>
            <person name="Ota T."/>
            <person name="Suzuki Y."/>
            <person name="Nishikawa T."/>
            <person name="Otsuki T."/>
            <person name="Sugiyama T."/>
            <person name="Irie R."/>
            <person name="Wakamatsu A."/>
            <person name="Hayashi K."/>
            <person name="Sato H."/>
            <person name="Nagai K."/>
            <person name="Kimura K."/>
            <person name="Makita H."/>
            <person name="Sekine M."/>
            <person name="Obayashi M."/>
            <person name="Nishi T."/>
            <person name="Shibahara T."/>
            <person name="Tanaka T."/>
            <person name="Ishii S."/>
            <person name="Yamamoto J."/>
            <person name="Saito K."/>
            <person name="Kawai Y."/>
            <person name="Isono Y."/>
            <person name="Nakamura Y."/>
            <person name="Nagahari K."/>
            <person name="Murakami K."/>
            <person name="Yasuda T."/>
            <person name="Iwayanagi T."/>
            <person name="Wagatsuma M."/>
            <person name="Shiratori A."/>
            <person name="Sudo H."/>
            <person name="Hosoiri T."/>
            <person name="Kaku Y."/>
            <person name="Kodaira H."/>
            <person name="Kondo H."/>
            <person name="Sugawara M."/>
            <person name="Takahashi M."/>
            <person name="Kanda K."/>
            <person name="Yokoi T."/>
            <person name="Furuya T."/>
            <person name="Kikkawa E."/>
            <person name="Omura Y."/>
            <person name="Abe K."/>
            <person name="Kamihara K."/>
            <person name="Katsuta N."/>
            <person name="Sato K."/>
            <person name="Tanikawa M."/>
            <person name="Yamazaki M."/>
            <person name="Ninomiya K."/>
            <person name="Ishibashi T."/>
            <person name="Yamashita H."/>
            <person name="Murakawa K."/>
            <person name="Fujimori K."/>
            <person name="Tanai H."/>
            <person name="Kimata M."/>
            <person name="Watanabe M."/>
            <person name="Hiraoka S."/>
            <person name="Chiba Y."/>
            <person name="Ishida S."/>
            <person name="Ono Y."/>
            <person name="Takiguchi S."/>
            <person name="Watanabe S."/>
            <person name="Yosida M."/>
            <person name="Hotuta T."/>
            <person name="Kusano J."/>
            <person name="Kanehori K."/>
            <person name="Takahashi-Fujii A."/>
            <person name="Hara H."/>
            <person name="Tanase T.-O."/>
            <person name="Nomura Y."/>
            <person name="Togiya S."/>
            <person name="Komai F."/>
            <person name="Hara R."/>
            <person name="Takeuchi K."/>
            <person name="Arita M."/>
            <person name="Imose N."/>
            <person name="Musashino K."/>
            <person name="Yuuki H."/>
            <person name="Oshima A."/>
            <person name="Sasaki N."/>
            <person name="Aotsuka S."/>
            <person name="Yoshikawa Y."/>
            <person name="Matsunawa H."/>
            <person name="Ichihara T."/>
            <person name="Shiohata N."/>
            <person name="Sano S."/>
            <person name="Moriya S."/>
            <person name="Momiyama H."/>
            <person name="Satoh N."/>
            <person name="Takami S."/>
            <person name="Terashima Y."/>
            <person name="Suzuki O."/>
            <person name="Nakagawa S."/>
            <person name="Senoh A."/>
            <person name="Mizoguchi H."/>
            <person name="Goto Y."/>
            <person name="Shimizu F."/>
            <person name="Wakebe H."/>
            <person name="Hishigaki H."/>
            <person name="Watanabe T."/>
            <person name="Sugiyama A."/>
            <person name="Takemoto M."/>
            <person name="Kawakami B."/>
            <person name="Yamazaki M."/>
            <person name="Watanabe K."/>
            <person name="Kumagai A."/>
            <person name="Itakura S."/>
            <person name="Fukuzumi Y."/>
            <person name="Fujimori Y."/>
            <person name="Komiyama M."/>
            <person name="Tashiro H."/>
            <person name="Tanigami A."/>
            <person name="Fujiwara T."/>
            <person name="Ono T."/>
            <person name="Yamada K."/>
            <person name="Fujii Y."/>
            <person name="Ozaki K."/>
            <person name="Hirao M."/>
            <person name="Ohmori Y."/>
            <person name="Kawabata A."/>
            <person name="Hikiji T."/>
            <person name="Kobatake N."/>
            <person name="Inagaki H."/>
            <person name="Ikema Y."/>
            <person name="Okamoto S."/>
            <person name="Okitani R."/>
            <person name="Kawakami T."/>
            <person name="Noguchi S."/>
            <person name="Itoh T."/>
            <person name="Shigeta K."/>
            <person name="Senba T."/>
            <person name="Matsumura K."/>
            <person name="Nakajima Y."/>
            <person name="Mizuno T."/>
            <person name="Morinaga M."/>
            <person name="Sasaki M."/>
            <person name="Togashi T."/>
            <person name="Oyama M."/>
            <person name="Hata H."/>
            <person name="Watanabe M."/>
            <person name="Komatsu T."/>
            <person name="Mizushima-Sugano J."/>
            <person name="Satoh T."/>
            <person name="Shirai Y."/>
            <person name="Takahashi Y."/>
            <person name="Nakagawa K."/>
            <person name="Okumura K."/>
            <person name="Nagase T."/>
            <person name="Nomura N."/>
            <person name="Kikuchi H."/>
            <person name="Masuho Y."/>
            <person name="Yamashita R."/>
            <person name="Nakai K."/>
            <person name="Yada T."/>
            <person name="Nakamura Y."/>
            <person name="Ohara O."/>
            <person name="Isogai T."/>
            <person name="Sugano S."/>
        </authorList>
    </citation>
    <scope>NUCLEOTIDE SEQUENCE [LARGE SCALE MRNA] (ISOFORMS 1 AND 2)</scope>
    <source>
        <tissue>Hepatoma</tissue>
        <tissue>Testis</tissue>
    </source>
</reference>
<reference key="4">
    <citation type="journal article" date="2004" name="Nature">
        <title>DNA sequence and analysis of human chromosome 9.</title>
        <authorList>
            <person name="Humphray S.J."/>
            <person name="Oliver K."/>
            <person name="Hunt A.R."/>
            <person name="Plumb R.W."/>
            <person name="Loveland J.E."/>
            <person name="Howe K.L."/>
            <person name="Andrews T.D."/>
            <person name="Searle S."/>
            <person name="Hunt S.E."/>
            <person name="Scott C.E."/>
            <person name="Jones M.C."/>
            <person name="Ainscough R."/>
            <person name="Almeida J.P."/>
            <person name="Ambrose K.D."/>
            <person name="Ashwell R.I.S."/>
            <person name="Babbage A.K."/>
            <person name="Babbage S."/>
            <person name="Bagguley C.L."/>
            <person name="Bailey J."/>
            <person name="Banerjee R."/>
            <person name="Barker D.J."/>
            <person name="Barlow K.F."/>
            <person name="Bates K."/>
            <person name="Beasley H."/>
            <person name="Beasley O."/>
            <person name="Bird C.P."/>
            <person name="Bray-Allen S."/>
            <person name="Brown A.J."/>
            <person name="Brown J.Y."/>
            <person name="Burford D."/>
            <person name="Burrill W."/>
            <person name="Burton J."/>
            <person name="Carder C."/>
            <person name="Carter N.P."/>
            <person name="Chapman J.C."/>
            <person name="Chen Y."/>
            <person name="Clarke G."/>
            <person name="Clark S.Y."/>
            <person name="Clee C.M."/>
            <person name="Clegg S."/>
            <person name="Collier R.E."/>
            <person name="Corby N."/>
            <person name="Crosier M."/>
            <person name="Cummings A.T."/>
            <person name="Davies J."/>
            <person name="Dhami P."/>
            <person name="Dunn M."/>
            <person name="Dutta I."/>
            <person name="Dyer L.W."/>
            <person name="Earthrowl M.E."/>
            <person name="Faulkner L."/>
            <person name="Fleming C.J."/>
            <person name="Frankish A."/>
            <person name="Frankland J.A."/>
            <person name="French L."/>
            <person name="Fricker D.G."/>
            <person name="Garner P."/>
            <person name="Garnett J."/>
            <person name="Ghori J."/>
            <person name="Gilbert J.G.R."/>
            <person name="Glison C."/>
            <person name="Grafham D.V."/>
            <person name="Gribble S."/>
            <person name="Griffiths C."/>
            <person name="Griffiths-Jones S."/>
            <person name="Grocock R."/>
            <person name="Guy J."/>
            <person name="Hall R.E."/>
            <person name="Hammond S."/>
            <person name="Harley J.L."/>
            <person name="Harrison E.S.I."/>
            <person name="Hart E.A."/>
            <person name="Heath P.D."/>
            <person name="Henderson C.D."/>
            <person name="Hopkins B.L."/>
            <person name="Howard P.J."/>
            <person name="Howden P.J."/>
            <person name="Huckle E."/>
            <person name="Johnson C."/>
            <person name="Johnson D."/>
            <person name="Joy A.A."/>
            <person name="Kay M."/>
            <person name="Keenan S."/>
            <person name="Kershaw J.K."/>
            <person name="Kimberley A.M."/>
            <person name="King A."/>
            <person name="Knights A."/>
            <person name="Laird G.K."/>
            <person name="Langford C."/>
            <person name="Lawlor S."/>
            <person name="Leongamornlert D.A."/>
            <person name="Leversha M."/>
            <person name="Lloyd C."/>
            <person name="Lloyd D.M."/>
            <person name="Lovell J."/>
            <person name="Martin S."/>
            <person name="Mashreghi-Mohammadi M."/>
            <person name="Matthews L."/>
            <person name="McLaren S."/>
            <person name="McLay K.E."/>
            <person name="McMurray A."/>
            <person name="Milne S."/>
            <person name="Nickerson T."/>
            <person name="Nisbett J."/>
            <person name="Nordsiek G."/>
            <person name="Pearce A.V."/>
            <person name="Peck A.I."/>
            <person name="Porter K.M."/>
            <person name="Pandian R."/>
            <person name="Pelan S."/>
            <person name="Phillimore B."/>
            <person name="Povey S."/>
            <person name="Ramsey Y."/>
            <person name="Rand V."/>
            <person name="Scharfe M."/>
            <person name="Sehra H.K."/>
            <person name="Shownkeen R."/>
            <person name="Sims S.K."/>
            <person name="Skuce C.D."/>
            <person name="Smith M."/>
            <person name="Steward C.A."/>
            <person name="Swarbreck D."/>
            <person name="Sycamore N."/>
            <person name="Tester J."/>
            <person name="Thorpe A."/>
            <person name="Tracey A."/>
            <person name="Tromans A."/>
            <person name="Thomas D.W."/>
            <person name="Wall M."/>
            <person name="Wallis J.M."/>
            <person name="West A.P."/>
            <person name="Whitehead S.L."/>
            <person name="Willey D.L."/>
            <person name="Williams S.A."/>
            <person name="Wilming L."/>
            <person name="Wray P.W."/>
            <person name="Young L."/>
            <person name="Ashurst J.L."/>
            <person name="Coulson A."/>
            <person name="Blocker H."/>
            <person name="Durbin R.M."/>
            <person name="Sulston J.E."/>
            <person name="Hubbard T."/>
            <person name="Jackson M.J."/>
            <person name="Bentley D.R."/>
            <person name="Beck S."/>
            <person name="Rogers J."/>
            <person name="Dunham I."/>
        </authorList>
    </citation>
    <scope>NUCLEOTIDE SEQUENCE [LARGE SCALE GENOMIC DNA]</scope>
</reference>
<reference key="5">
    <citation type="journal article" date="2004" name="Genome Res.">
        <title>The status, quality, and expansion of the NIH full-length cDNA project: the Mammalian Gene Collection (MGC).</title>
        <authorList>
            <consortium name="The MGC Project Team"/>
        </authorList>
    </citation>
    <scope>NUCLEOTIDE SEQUENCE [LARGE SCALE MRNA] (ISOFORM 1)</scope>
    <source>
        <tissue>Testis</tissue>
    </source>
</reference>
<reference key="6">
    <citation type="journal article" date="2002" name="Mol. Biol. Cell">
        <title>Functional proteomic analysis of human nucleolus.</title>
        <authorList>
            <person name="Scherl A."/>
            <person name="Coute Y."/>
            <person name="Deon C."/>
            <person name="Calle A."/>
            <person name="Kindbeiter K."/>
            <person name="Sanchez J.-C."/>
            <person name="Greco A."/>
            <person name="Hochstrasser D.F."/>
            <person name="Diaz J.-J."/>
        </authorList>
    </citation>
    <scope>SUBCELLULAR LOCATION [LARGE SCALE ANALYSIS]</scope>
    <source>
        <tissue>Cervix carcinoma</tissue>
    </source>
</reference>
<reference key="7">
    <citation type="journal article" date="2005" name="Cell">
        <title>Physical association and coordinate function of the H3 K4 methyltransferase MLL1 and the H4 K16 acetyltransferase MOF.</title>
        <authorList>
            <person name="Dou Y."/>
            <person name="Milne T.A."/>
            <person name="Tackett A.J."/>
            <person name="Smith E.R."/>
            <person name="Fukuda A."/>
            <person name="Wysocka J."/>
            <person name="Allis C.D."/>
            <person name="Chait B.T."/>
            <person name="Hess J.L."/>
            <person name="Roeder R.G."/>
        </authorList>
    </citation>
    <scope>IDENTIFICATION IN THE MLL1/MLL COMPLEX</scope>
</reference>
<reference key="8">
    <citation type="journal article" date="2006" name="Nat. Biotechnol.">
        <title>A probability-based approach for high-throughput protein phosphorylation analysis and site localization.</title>
        <authorList>
            <person name="Beausoleil S.A."/>
            <person name="Villen J."/>
            <person name="Gerber S.A."/>
            <person name="Rush J."/>
            <person name="Gygi S.P."/>
        </authorList>
    </citation>
    <scope>IDENTIFICATION BY MASS SPECTROMETRY [LARGE SCALE ANALYSIS]</scope>
    <source>
        <tissue>Cervix carcinoma</tissue>
    </source>
</reference>
<reference key="9">
    <citation type="journal article" date="2008" name="Mol. Cell">
        <title>Kinase-selective enrichment enables quantitative phosphoproteomics of the kinome across the cell cycle.</title>
        <authorList>
            <person name="Daub H."/>
            <person name="Olsen J.V."/>
            <person name="Bairlein M."/>
            <person name="Gnad F."/>
            <person name="Oppermann F.S."/>
            <person name="Korner R."/>
            <person name="Greff Z."/>
            <person name="Keri G."/>
            <person name="Stemmann O."/>
            <person name="Mann M."/>
        </authorList>
    </citation>
    <scope>IDENTIFICATION BY MASS SPECTROMETRY [LARGE SCALE ANALYSIS]</scope>
    <source>
        <tissue>Cervix carcinoma</tissue>
    </source>
</reference>
<reference key="10">
    <citation type="journal article" date="2008" name="Proc. Natl. Acad. Sci. U.S.A.">
        <title>A quantitative atlas of mitotic phosphorylation.</title>
        <authorList>
            <person name="Dephoure N."/>
            <person name="Zhou C."/>
            <person name="Villen J."/>
            <person name="Beausoleil S.A."/>
            <person name="Bakalarski C.E."/>
            <person name="Elledge S.J."/>
            <person name="Gygi S.P."/>
        </authorList>
    </citation>
    <scope>IDENTIFICATION BY MASS SPECTROMETRY [LARGE SCALE ANALYSIS]</scope>
    <source>
        <tissue>Cervix carcinoma</tissue>
    </source>
</reference>
<reference key="11">
    <citation type="journal article" date="2009" name="Anal. Chem.">
        <title>Lys-N and trypsin cover complementary parts of the phosphoproteome in a refined SCX-based approach.</title>
        <authorList>
            <person name="Gauci S."/>
            <person name="Helbig A.O."/>
            <person name="Slijper M."/>
            <person name="Krijgsveld J."/>
            <person name="Heck A.J."/>
            <person name="Mohammed S."/>
        </authorList>
    </citation>
    <scope>IDENTIFICATION BY MASS SPECTROMETRY [LARGE SCALE ANALYSIS]</scope>
</reference>
<reference key="12">
    <citation type="journal article" date="2010" name="Sci. Signal.">
        <title>Quantitative phosphoproteomics reveals widespread full phosphorylation site occupancy during mitosis.</title>
        <authorList>
            <person name="Olsen J.V."/>
            <person name="Vermeulen M."/>
            <person name="Santamaria A."/>
            <person name="Kumar C."/>
            <person name="Miller M.L."/>
            <person name="Jensen L.J."/>
            <person name="Gnad F."/>
            <person name="Cox J."/>
            <person name="Jensen T.S."/>
            <person name="Nigg E.A."/>
            <person name="Brunak S."/>
            <person name="Mann M."/>
        </authorList>
    </citation>
    <scope>PHOSPHORYLATION [LARGE SCALE ANALYSIS] AT THR-29</scope>
    <scope>IDENTIFICATION BY MASS SPECTROMETRY [LARGE SCALE ANALYSIS]</scope>
    <source>
        <tissue>Cervix carcinoma</tissue>
    </source>
</reference>
<reference key="13">
    <citation type="journal article" date="2011" name="BMC Syst. Biol.">
        <title>Initial characterization of the human central proteome.</title>
        <authorList>
            <person name="Burkard T.R."/>
            <person name="Planyavsky M."/>
            <person name="Kaupe I."/>
            <person name="Breitwieser F.P."/>
            <person name="Buerckstuemmer T."/>
            <person name="Bennett K.L."/>
            <person name="Superti-Furga G."/>
            <person name="Colinge J."/>
        </authorList>
    </citation>
    <scope>IDENTIFICATION BY MASS SPECTROMETRY [LARGE SCALE ANALYSIS]</scope>
</reference>
<reference key="14">
    <citation type="journal article" date="2011" name="EMBO J.">
        <title>The SUMO system controls nucleolar partitioning of a novel mammalian ribosome biogenesis complex.</title>
        <authorList>
            <person name="Finkbeiner E."/>
            <person name="Haindl M."/>
            <person name="Muller S."/>
        </authorList>
    </citation>
    <scope>IDENTIFICATION IN THE PELP1 COMPLEX</scope>
    <scope>SUBCELLULAR LOCATION</scope>
</reference>
<reference key="15">
    <citation type="journal article" date="2012" name="Mol. Cell. Proteomics">
        <title>Five friends of methylated chromatin target of protein-arginine-methyltransferase[prmt]-1 (chtop), a complex linking arginine methylation to desumoylation.</title>
        <authorList>
            <person name="Fanis P."/>
            <person name="Gillemans N."/>
            <person name="Aghajanirefah A."/>
            <person name="Pourfarzad F."/>
            <person name="Demmers J."/>
            <person name="Esteghamat F."/>
            <person name="Vadlamudi R.K."/>
            <person name="Grosveld F."/>
            <person name="Philipsen S."/>
            <person name="van Dijk T.B."/>
        </authorList>
    </citation>
    <scope>FUNCTION</scope>
    <scope>IDENTIFICATION IN THE 5FMC COMPLEX</scope>
</reference>
<reference key="16">
    <citation type="journal article" date="2013" name="J. Proteome Res.">
        <title>Toward a comprehensive characterization of a human cancer cell phosphoproteome.</title>
        <authorList>
            <person name="Zhou H."/>
            <person name="Di Palma S."/>
            <person name="Preisinger C."/>
            <person name="Peng M."/>
            <person name="Polat A.N."/>
            <person name="Heck A.J."/>
            <person name="Mohammed S."/>
        </authorList>
    </citation>
    <scope>PHOSPHORYLATION [LARGE SCALE ANALYSIS] AT THR-29</scope>
    <scope>IDENTIFICATION BY MASS SPECTROMETRY [LARGE SCALE ANALYSIS]</scope>
    <source>
        <tissue>Cervix carcinoma</tissue>
        <tissue>Erythroleukemia</tissue>
    </source>
</reference>